<proteinExistence type="inferred from homology"/>
<comment type="function">
    <text evidence="1">This is one of the proteins that bind and probably mediate the attachment of the 5S RNA into the large ribosomal subunit, where it forms part of the central protuberance. In the 70S ribosome it contacts protein S13 of the 30S subunit (bridge B1b), connecting the 2 subunits; this bridge is implicated in subunit movement. Contacts the P site tRNA; the 5S rRNA and some of its associated proteins might help stabilize positioning of ribosome-bound tRNAs.</text>
</comment>
<comment type="subunit">
    <text evidence="1">Part of the 50S ribosomal subunit; part of the 5S rRNA/L5/L18/L25 subcomplex. Contacts the 5S rRNA and the P site tRNA. Forms a bridge to the 30S subunit in the 70S ribosome.</text>
</comment>
<comment type="similarity">
    <text evidence="1">Belongs to the universal ribosomal protein uL5 family.</text>
</comment>
<evidence type="ECO:0000255" key="1">
    <source>
        <dbReference type="HAMAP-Rule" id="MF_01333"/>
    </source>
</evidence>
<evidence type="ECO:0000305" key="2"/>
<feature type="chain" id="PRO_1000052841" description="Large ribosomal subunit protein uL5">
    <location>
        <begin position="1"/>
        <end position="180"/>
    </location>
</feature>
<reference key="1">
    <citation type="journal article" date="2006" name="Proc. Natl. Acad. Sci. U.S.A.">
        <title>Molecular genetic anatomy of inter- and intraserotype variation in the human bacterial pathogen group A Streptococcus.</title>
        <authorList>
            <person name="Beres S.B."/>
            <person name="Richter E.W."/>
            <person name="Nagiec M.J."/>
            <person name="Sumby P."/>
            <person name="Porcella S.F."/>
            <person name="DeLeo F.R."/>
            <person name="Musser J.M."/>
        </authorList>
    </citation>
    <scope>NUCLEOTIDE SEQUENCE [LARGE SCALE GENOMIC DNA]</scope>
    <source>
        <strain>MGAS10270</strain>
    </source>
</reference>
<sequence length="180" mass="19815">MANRLKEKYTNEVIPALTEKFNYTSVMAVPKVEKIVLNMGVGDAVSNAKNLEKAAAELALISGQKPLITKAKKSIAGFRLREGVAIGAKVTLRGERMYEFLDKLVSVSLPRVRDFHGVPTKSFDGRGNYTLGVKEQLIFPEISFDDVDKVRGLDIVIVTTANTDEESRELLKGLGMPFAK</sequence>
<gene>
    <name evidence="1" type="primary">rplE</name>
    <name type="ordered locus">MGAS10270_Spy0058</name>
</gene>
<protein>
    <recommendedName>
        <fullName evidence="1">Large ribosomal subunit protein uL5</fullName>
    </recommendedName>
    <alternativeName>
        <fullName evidence="2">50S ribosomal protein L5</fullName>
    </alternativeName>
</protein>
<keyword id="KW-0687">Ribonucleoprotein</keyword>
<keyword id="KW-0689">Ribosomal protein</keyword>
<keyword id="KW-0694">RNA-binding</keyword>
<keyword id="KW-0699">rRNA-binding</keyword>
<keyword id="KW-0820">tRNA-binding</keyword>
<dbReference type="EMBL" id="CP000260">
    <property type="protein sequence ID" value="ABF33123.1"/>
    <property type="molecule type" value="Genomic_DNA"/>
</dbReference>
<dbReference type="RefSeq" id="WP_002986634.1">
    <property type="nucleotide sequence ID" value="NZ_CVUH01000001.1"/>
</dbReference>
<dbReference type="SMR" id="Q1JJ50"/>
<dbReference type="GeneID" id="69900038"/>
<dbReference type="KEGG" id="sph:MGAS10270_Spy0058"/>
<dbReference type="HOGENOM" id="CLU_061015_2_1_9"/>
<dbReference type="Proteomes" id="UP000002436">
    <property type="component" value="Chromosome"/>
</dbReference>
<dbReference type="GO" id="GO:1990904">
    <property type="term" value="C:ribonucleoprotein complex"/>
    <property type="evidence" value="ECO:0007669"/>
    <property type="project" value="UniProtKB-KW"/>
</dbReference>
<dbReference type="GO" id="GO:0005840">
    <property type="term" value="C:ribosome"/>
    <property type="evidence" value="ECO:0007669"/>
    <property type="project" value="UniProtKB-KW"/>
</dbReference>
<dbReference type="GO" id="GO:0019843">
    <property type="term" value="F:rRNA binding"/>
    <property type="evidence" value="ECO:0007669"/>
    <property type="project" value="UniProtKB-UniRule"/>
</dbReference>
<dbReference type="GO" id="GO:0003735">
    <property type="term" value="F:structural constituent of ribosome"/>
    <property type="evidence" value="ECO:0007669"/>
    <property type="project" value="InterPro"/>
</dbReference>
<dbReference type="GO" id="GO:0000049">
    <property type="term" value="F:tRNA binding"/>
    <property type="evidence" value="ECO:0007669"/>
    <property type="project" value="UniProtKB-UniRule"/>
</dbReference>
<dbReference type="GO" id="GO:0006412">
    <property type="term" value="P:translation"/>
    <property type="evidence" value="ECO:0007669"/>
    <property type="project" value="UniProtKB-UniRule"/>
</dbReference>
<dbReference type="FunFam" id="3.30.1440.10:FF:000001">
    <property type="entry name" value="50S ribosomal protein L5"/>
    <property type="match status" value="1"/>
</dbReference>
<dbReference type="Gene3D" id="3.30.1440.10">
    <property type="match status" value="1"/>
</dbReference>
<dbReference type="HAMAP" id="MF_01333_B">
    <property type="entry name" value="Ribosomal_uL5_B"/>
    <property type="match status" value="1"/>
</dbReference>
<dbReference type="InterPro" id="IPR002132">
    <property type="entry name" value="Ribosomal_uL5"/>
</dbReference>
<dbReference type="InterPro" id="IPR020930">
    <property type="entry name" value="Ribosomal_uL5_bac-type"/>
</dbReference>
<dbReference type="InterPro" id="IPR031309">
    <property type="entry name" value="Ribosomal_uL5_C"/>
</dbReference>
<dbReference type="InterPro" id="IPR020929">
    <property type="entry name" value="Ribosomal_uL5_CS"/>
</dbReference>
<dbReference type="InterPro" id="IPR022803">
    <property type="entry name" value="Ribosomal_uL5_dom_sf"/>
</dbReference>
<dbReference type="InterPro" id="IPR031310">
    <property type="entry name" value="Ribosomal_uL5_N"/>
</dbReference>
<dbReference type="NCBIfam" id="NF000585">
    <property type="entry name" value="PRK00010.1"/>
    <property type="match status" value="1"/>
</dbReference>
<dbReference type="PANTHER" id="PTHR11994">
    <property type="entry name" value="60S RIBOSOMAL PROTEIN L11-RELATED"/>
    <property type="match status" value="1"/>
</dbReference>
<dbReference type="Pfam" id="PF00281">
    <property type="entry name" value="Ribosomal_L5"/>
    <property type="match status" value="1"/>
</dbReference>
<dbReference type="Pfam" id="PF00673">
    <property type="entry name" value="Ribosomal_L5_C"/>
    <property type="match status" value="1"/>
</dbReference>
<dbReference type="PIRSF" id="PIRSF002161">
    <property type="entry name" value="Ribosomal_L5"/>
    <property type="match status" value="1"/>
</dbReference>
<dbReference type="SUPFAM" id="SSF55282">
    <property type="entry name" value="RL5-like"/>
    <property type="match status" value="1"/>
</dbReference>
<dbReference type="PROSITE" id="PS00358">
    <property type="entry name" value="RIBOSOMAL_L5"/>
    <property type="match status" value="1"/>
</dbReference>
<name>RL5_STRPD</name>
<organism>
    <name type="scientific">Streptococcus pyogenes serotype M2 (strain MGAS10270)</name>
    <dbReference type="NCBI Taxonomy" id="370552"/>
    <lineage>
        <taxon>Bacteria</taxon>
        <taxon>Bacillati</taxon>
        <taxon>Bacillota</taxon>
        <taxon>Bacilli</taxon>
        <taxon>Lactobacillales</taxon>
        <taxon>Streptococcaceae</taxon>
        <taxon>Streptococcus</taxon>
    </lineage>
</organism>
<accession>Q1JJ50</accession>